<reference key="1">
    <citation type="journal article" date="1993" name="Gene">
        <title>Analysis of the petunia nitrate reductase apoenzyme-encoding gene: a first step for sequence modification analysis.</title>
        <authorList>
            <person name="Salanoubat M."/>
            <person name="Ha D.B.D."/>
        </authorList>
    </citation>
    <scope>NUCLEOTIDE SEQUENCE [GENOMIC DNA]</scope>
    <source>
        <strain>cv. TLRL13</strain>
        <tissue>Leaf</tissue>
    </source>
</reference>
<dbReference type="EC" id="1.7.1.1"/>
<dbReference type="EMBL" id="L13691">
    <property type="protein sequence ID" value="AAA33713.1"/>
    <property type="molecule type" value="Genomic_DNA"/>
</dbReference>
<dbReference type="SMR" id="P36859"/>
<dbReference type="GO" id="GO:0071949">
    <property type="term" value="F:FAD binding"/>
    <property type="evidence" value="ECO:0000250"/>
    <property type="project" value="UniProtKB"/>
</dbReference>
<dbReference type="GO" id="GO:0020037">
    <property type="term" value="F:heme binding"/>
    <property type="evidence" value="ECO:0007669"/>
    <property type="project" value="InterPro"/>
</dbReference>
<dbReference type="GO" id="GO:0030151">
    <property type="term" value="F:molybdenum ion binding"/>
    <property type="evidence" value="ECO:0000250"/>
    <property type="project" value="UniProtKB"/>
</dbReference>
<dbReference type="GO" id="GO:0043546">
    <property type="term" value="F:molybdopterin cofactor binding"/>
    <property type="evidence" value="ECO:0007669"/>
    <property type="project" value="InterPro"/>
</dbReference>
<dbReference type="GO" id="GO:0009703">
    <property type="term" value="F:nitrate reductase (NADH) activity"/>
    <property type="evidence" value="ECO:0007669"/>
    <property type="project" value="UniProtKB-EC"/>
</dbReference>
<dbReference type="GO" id="GO:0050464">
    <property type="term" value="F:nitrate reductase (NADPH) activity"/>
    <property type="evidence" value="ECO:0007669"/>
    <property type="project" value="InterPro"/>
</dbReference>
<dbReference type="GO" id="GO:0008482">
    <property type="term" value="F:sulfite oxidase activity"/>
    <property type="evidence" value="ECO:0007669"/>
    <property type="project" value="TreeGrafter"/>
</dbReference>
<dbReference type="GO" id="GO:0042128">
    <property type="term" value="P:nitrate assimilation"/>
    <property type="evidence" value="ECO:0007669"/>
    <property type="project" value="UniProtKB-KW"/>
</dbReference>
<dbReference type="GO" id="GO:0006809">
    <property type="term" value="P:nitric oxide biosynthetic process"/>
    <property type="evidence" value="ECO:0007669"/>
    <property type="project" value="InterPro"/>
</dbReference>
<dbReference type="GO" id="GO:0006790">
    <property type="term" value="P:sulfur compound metabolic process"/>
    <property type="evidence" value="ECO:0007669"/>
    <property type="project" value="TreeGrafter"/>
</dbReference>
<dbReference type="CDD" id="cd06183">
    <property type="entry name" value="cyt_b5_reduct_like"/>
    <property type="match status" value="1"/>
</dbReference>
<dbReference type="CDD" id="cd02112">
    <property type="entry name" value="eukary_NR_Moco"/>
    <property type="match status" value="1"/>
</dbReference>
<dbReference type="FunFam" id="2.40.30.10:FF:000021">
    <property type="entry name" value="NADH-cytochrome b5 reductase"/>
    <property type="match status" value="1"/>
</dbReference>
<dbReference type="FunFam" id="2.60.40.650:FF:000001">
    <property type="entry name" value="Nitrate reductase"/>
    <property type="match status" value="1"/>
</dbReference>
<dbReference type="FunFam" id="3.10.120.10:FF:000008">
    <property type="entry name" value="Nitrate reductase"/>
    <property type="match status" value="1"/>
</dbReference>
<dbReference type="FunFam" id="3.90.420.10:FF:000003">
    <property type="entry name" value="Nitrate reductase"/>
    <property type="match status" value="1"/>
</dbReference>
<dbReference type="FunFam" id="3.40.50.80:FF:000025">
    <property type="entry name" value="Nitrate reductase [NADH]"/>
    <property type="match status" value="1"/>
</dbReference>
<dbReference type="Gene3D" id="2.60.40.650">
    <property type="match status" value="1"/>
</dbReference>
<dbReference type="Gene3D" id="3.10.120.10">
    <property type="entry name" value="Cytochrome b5-like heme/steroid binding domain"/>
    <property type="match status" value="1"/>
</dbReference>
<dbReference type="Gene3D" id="3.40.50.80">
    <property type="entry name" value="Nucleotide-binding domain of ferredoxin-NADP reductase (FNR) module"/>
    <property type="match status" value="1"/>
</dbReference>
<dbReference type="Gene3D" id="3.90.420.10">
    <property type="entry name" value="Oxidoreductase, molybdopterin-binding domain"/>
    <property type="match status" value="1"/>
</dbReference>
<dbReference type="Gene3D" id="2.40.30.10">
    <property type="entry name" value="Translation factors"/>
    <property type="match status" value="1"/>
</dbReference>
<dbReference type="InterPro" id="IPR008333">
    <property type="entry name" value="Cbr1-like_FAD-bd_dom"/>
</dbReference>
<dbReference type="InterPro" id="IPR001199">
    <property type="entry name" value="Cyt_B5-like_heme/steroid-bd"/>
</dbReference>
<dbReference type="InterPro" id="IPR036400">
    <property type="entry name" value="Cyt_B5-like_heme/steroid_sf"/>
</dbReference>
<dbReference type="InterPro" id="IPR018506">
    <property type="entry name" value="Cyt_B5_heme-BS"/>
</dbReference>
<dbReference type="InterPro" id="IPR017927">
    <property type="entry name" value="FAD-bd_FR_type"/>
</dbReference>
<dbReference type="InterPro" id="IPR001709">
    <property type="entry name" value="Flavoprot_Pyr_Nucl_cyt_Rdtase"/>
</dbReference>
<dbReference type="InterPro" id="IPR039261">
    <property type="entry name" value="FNR_nucleotide-bd"/>
</dbReference>
<dbReference type="InterPro" id="IPR014756">
    <property type="entry name" value="Ig_E-set"/>
</dbReference>
<dbReference type="InterPro" id="IPR005066">
    <property type="entry name" value="MoCF_OxRdtse_dimer"/>
</dbReference>
<dbReference type="InterPro" id="IPR008335">
    <property type="entry name" value="Mopterin_OxRdtase_euk"/>
</dbReference>
<dbReference type="InterPro" id="IPR012137">
    <property type="entry name" value="Nitr_rd_NADH"/>
</dbReference>
<dbReference type="InterPro" id="IPR001433">
    <property type="entry name" value="OxRdtase_FAD/NAD-bd"/>
</dbReference>
<dbReference type="InterPro" id="IPR000572">
    <property type="entry name" value="OxRdtase_Mopterin-bd_dom"/>
</dbReference>
<dbReference type="InterPro" id="IPR036374">
    <property type="entry name" value="OxRdtase_Mopterin-bd_sf"/>
</dbReference>
<dbReference type="InterPro" id="IPR022407">
    <property type="entry name" value="OxRdtase_Mopterin_BS"/>
</dbReference>
<dbReference type="InterPro" id="IPR017938">
    <property type="entry name" value="Riboflavin_synthase-like_b-brl"/>
</dbReference>
<dbReference type="PANTHER" id="PTHR19372:SF7">
    <property type="entry name" value="SULFITE OXIDASE, MITOCHONDRIAL"/>
    <property type="match status" value="1"/>
</dbReference>
<dbReference type="PANTHER" id="PTHR19372">
    <property type="entry name" value="SULFITE REDUCTASE"/>
    <property type="match status" value="1"/>
</dbReference>
<dbReference type="Pfam" id="PF00173">
    <property type="entry name" value="Cyt-b5"/>
    <property type="match status" value="1"/>
</dbReference>
<dbReference type="Pfam" id="PF00970">
    <property type="entry name" value="FAD_binding_6"/>
    <property type="match status" value="1"/>
</dbReference>
<dbReference type="Pfam" id="PF03404">
    <property type="entry name" value="Mo-co_dimer"/>
    <property type="match status" value="1"/>
</dbReference>
<dbReference type="Pfam" id="PF00175">
    <property type="entry name" value="NAD_binding_1"/>
    <property type="match status" value="1"/>
</dbReference>
<dbReference type="Pfam" id="PF00174">
    <property type="entry name" value="Oxidored_molyb"/>
    <property type="match status" value="1"/>
</dbReference>
<dbReference type="PIRSF" id="PIRSF000233">
    <property type="entry name" value="Nitr_rd_NADH"/>
    <property type="match status" value="1"/>
</dbReference>
<dbReference type="PRINTS" id="PR00406">
    <property type="entry name" value="CYTB5RDTASE"/>
</dbReference>
<dbReference type="PRINTS" id="PR00363">
    <property type="entry name" value="CYTOCHROMEB5"/>
</dbReference>
<dbReference type="PRINTS" id="PR00407">
    <property type="entry name" value="EUMOPTERIN"/>
</dbReference>
<dbReference type="PRINTS" id="PR00371">
    <property type="entry name" value="FPNCR"/>
</dbReference>
<dbReference type="SMART" id="SM01117">
    <property type="entry name" value="Cyt-b5"/>
    <property type="match status" value="1"/>
</dbReference>
<dbReference type="SUPFAM" id="SSF55856">
    <property type="entry name" value="Cytochrome b5-like heme/steroid binding domain"/>
    <property type="match status" value="1"/>
</dbReference>
<dbReference type="SUPFAM" id="SSF81296">
    <property type="entry name" value="E set domains"/>
    <property type="match status" value="1"/>
</dbReference>
<dbReference type="SUPFAM" id="SSF52343">
    <property type="entry name" value="Ferredoxin reductase-like, C-terminal NADP-linked domain"/>
    <property type="match status" value="1"/>
</dbReference>
<dbReference type="SUPFAM" id="SSF56524">
    <property type="entry name" value="Oxidoreductase molybdopterin-binding domain"/>
    <property type="match status" value="1"/>
</dbReference>
<dbReference type="SUPFAM" id="SSF63380">
    <property type="entry name" value="Riboflavin synthase domain-like"/>
    <property type="match status" value="1"/>
</dbReference>
<dbReference type="PROSITE" id="PS00191">
    <property type="entry name" value="CYTOCHROME_B5_1"/>
    <property type="match status" value="1"/>
</dbReference>
<dbReference type="PROSITE" id="PS50255">
    <property type="entry name" value="CYTOCHROME_B5_2"/>
    <property type="match status" value="1"/>
</dbReference>
<dbReference type="PROSITE" id="PS51384">
    <property type="entry name" value="FAD_FR"/>
    <property type="match status" value="1"/>
</dbReference>
<dbReference type="PROSITE" id="PS00559">
    <property type="entry name" value="MOLYBDOPTERIN_EUK"/>
    <property type="match status" value="1"/>
</dbReference>
<proteinExistence type="evidence at transcript level"/>
<accession>P36859</accession>
<gene>
    <name type="primary">NIA</name>
</gene>
<keyword id="KW-1015">Disulfide bond</keyword>
<keyword id="KW-0274">FAD</keyword>
<keyword id="KW-0285">Flavoprotein</keyword>
<keyword id="KW-0349">Heme</keyword>
<keyword id="KW-0408">Iron</keyword>
<keyword id="KW-0479">Metal-binding</keyword>
<keyword id="KW-0500">Molybdenum</keyword>
<keyword id="KW-0520">NAD</keyword>
<keyword id="KW-0534">Nitrate assimilation</keyword>
<keyword id="KW-0560">Oxidoreductase</keyword>
<evidence type="ECO:0000250" key="1"/>
<evidence type="ECO:0000250" key="2">
    <source>
        <dbReference type="UniProtKB" id="A0A286R227"/>
    </source>
</evidence>
<evidence type="ECO:0000250" key="3">
    <source>
        <dbReference type="UniProtKB" id="P17571"/>
    </source>
</evidence>
<evidence type="ECO:0000250" key="4">
    <source>
        <dbReference type="UniProtKB" id="P49050"/>
    </source>
</evidence>
<evidence type="ECO:0000255" key="5"/>
<evidence type="ECO:0000255" key="6">
    <source>
        <dbReference type="PROSITE-ProRule" id="PRU00279"/>
    </source>
</evidence>
<evidence type="ECO:0000255" key="7">
    <source>
        <dbReference type="PROSITE-ProRule" id="PRU00716"/>
    </source>
</evidence>
<evidence type="ECO:0000305" key="8"/>
<protein>
    <recommendedName>
        <fullName>Nitrate reductase [NADH]</fullName>
        <shortName>NR</shortName>
        <ecNumber>1.7.1.1</ecNumber>
    </recommendedName>
</protein>
<organism>
    <name type="scientific">Petunia hybrida</name>
    <name type="common">Petunia</name>
    <dbReference type="NCBI Taxonomy" id="4102"/>
    <lineage>
        <taxon>Eukaryota</taxon>
        <taxon>Viridiplantae</taxon>
        <taxon>Streptophyta</taxon>
        <taxon>Embryophyta</taxon>
        <taxon>Tracheophyta</taxon>
        <taxon>Spermatophyta</taxon>
        <taxon>Magnoliopsida</taxon>
        <taxon>eudicotyledons</taxon>
        <taxon>Gunneridae</taxon>
        <taxon>Pentapetalae</taxon>
        <taxon>asterids</taxon>
        <taxon>lamiids</taxon>
        <taxon>Solanales</taxon>
        <taxon>Solanaceae</taxon>
        <taxon>Petunioideae</taxon>
        <taxon>Petunia</taxon>
    </lineage>
</organism>
<sequence length="909" mass="102376">MAASVENRQFSHLEPGLSGVVRSFKPRSDSPVRGCNFPLNNELTNFQKKPNTTIYLDCSSSEDDDDDDDKNEYLQMIRKGKLEVEPSVHDIRDEGTADNWIERNNSMIRLTGKHPFNSEPPLARLMHHGFITPVPLHYVRNHGPVPKGMWDDWTVEVTGLVKRPMKFTMEQLVNEFPSRELPVTLVCAGNRRKEQNMVKQTIGFNWGAAAVSTTVWRGVPLRAILKRCGIYSRTKGALNICFEGADVLPGGGGSKYGTSIKKEFAMDPSRDIIIAYMQNGEKLTPDHGFPLRMIIPGFIGGRMVKWLKRIIVTTQESESYYHYKDNRVLPPHVDAELANAEAWWYKPEYIINELNINSVITTPCHEEILPINSWTTQRPYTLRGYSYSGGGKKVTRVEVTMDGGETWNVCTVDHPEKPNKYGKYWCWCFWSLEVEVLDLLSAKEIAVRAWDETLNTQPEKLIWNVMGMMNNCWFRVKTNVCKPHKGEIGIVFEHPTQPGNLSGGWMAKERHLEISAEAPPTLKKSISTPFMNTASKMYSMSEVKKHNSADSAWIIVHGHVYDATRFLKDHPGGIDSILINAGTDCTEEFDAIHSDKAKKLLEDFRIGELITTGYTSDSSPNNSVHGSSSFSGFLAPIKELAPAVRSVALIPREKIPCKLVDKKSISHDVRKFRFALPSEDQVLGLPVGKHIFLCAIIDDKLCMRAYTPTSTVDEVGYFELVVKIYFKGIVPKFPNGGQMSQYLDSLPLGAFVDVKGPLGHIEYQGRGNFLVHGKRKFAKKLAMLAGGTGITPVYQVMQAILKDPEDETEMHVVYANRTEDDILLKDELDSWAVKLPERVKVWYVVQDSIKEGWKYSTGFITEAVLREHIPLPSQTTLALACGPPPMIQFAVNPNLEKMGYDIKDSLLVF</sequence>
<name>NIA_PETHY</name>
<feature type="chain" id="PRO_0000166066" description="Nitrate reductase [NADH]">
    <location>
        <begin position="1"/>
        <end position="909"/>
    </location>
</feature>
<feature type="domain" description="Cytochrome b5 heme-binding" evidence="6">
    <location>
        <begin position="535"/>
        <end position="610"/>
    </location>
</feature>
<feature type="domain" description="FAD-binding FR-type" evidence="7">
    <location>
        <begin position="652"/>
        <end position="764"/>
    </location>
</feature>
<feature type="binding site" evidence="4">
    <location>
        <position position="187"/>
    </location>
    <ligand>
        <name>Mo-molybdopterin</name>
        <dbReference type="ChEBI" id="CHEBI:71302"/>
    </ligand>
    <ligandPart>
        <name>Mo</name>
        <dbReference type="ChEBI" id="CHEBI:28685"/>
    </ligandPart>
</feature>
<feature type="binding site" description="axial binding residue" evidence="6">
    <location>
        <position position="570"/>
    </location>
    <ligand>
        <name>heme</name>
        <dbReference type="ChEBI" id="CHEBI:30413"/>
    </ligand>
    <ligandPart>
        <name>Fe</name>
        <dbReference type="ChEBI" id="CHEBI:18248"/>
    </ligandPart>
</feature>
<feature type="binding site" description="axial binding residue" evidence="6">
    <location>
        <position position="593"/>
    </location>
    <ligand>
        <name>heme</name>
        <dbReference type="ChEBI" id="CHEBI:30413"/>
    </ligand>
    <ligandPart>
        <name>Fe</name>
        <dbReference type="ChEBI" id="CHEBI:18248"/>
    </ligandPart>
</feature>
<feature type="binding site" evidence="2">
    <location>
        <begin position="704"/>
        <end position="707"/>
    </location>
    <ligand>
        <name>FAD</name>
        <dbReference type="ChEBI" id="CHEBI:57692"/>
    </ligand>
</feature>
<feature type="binding site" evidence="2">
    <location>
        <begin position="721"/>
        <end position="725"/>
    </location>
    <ligand>
        <name>FAD</name>
        <dbReference type="ChEBI" id="CHEBI:57692"/>
    </ligand>
</feature>
<feature type="binding site" evidence="3">
    <location>
        <position position="726"/>
    </location>
    <ligand>
        <name>FAD</name>
        <dbReference type="ChEBI" id="CHEBI:57692"/>
    </ligand>
</feature>
<feature type="binding site" evidence="2">
    <location>
        <position position="733"/>
    </location>
    <ligand>
        <name>FAD</name>
        <dbReference type="ChEBI" id="CHEBI:57692"/>
    </ligand>
</feature>
<feature type="binding site" evidence="2">
    <location>
        <begin position="738"/>
        <end position="740"/>
    </location>
    <ligand>
        <name>FAD</name>
        <dbReference type="ChEBI" id="CHEBI:57692"/>
    </ligand>
</feature>
<feature type="binding site" evidence="2">
    <location>
        <position position="791"/>
    </location>
    <ligand>
        <name>FAD</name>
        <dbReference type="ChEBI" id="CHEBI:57692"/>
    </ligand>
</feature>
<feature type="disulfide bond" description="Interchain" evidence="5">
    <location>
        <position position="426"/>
    </location>
</feature>
<comment type="function">
    <text>Nitrate reductase is a key enzyme involved in the first step of nitrate assimilation in plants, fungi and bacteria.</text>
</comment>
<comment type="catalytic activity">
    <reaction>
        <text>nitrite + NAD(+) + H2O = nitrate + NADH + H(+)</text>
        <dbReference type="Rhea" id="RHEA:17913"/>
        <dbReference type="ChEBI" id="CHEBI:15377"/>
        <dbReference type="ChEBI" id="CHEBI:15378"/>
        <dbReference type="ChEBI" id="CHEBI:16301"/>
        <dbReference type="ChEBI" id="CHEBI:17632"/>
        <dbReference type="ChEBI" id="CHEBI:57540"/>
        <dbReference type="ChEBI" id="CHEBI:57945"/>
        <dbReference type="EC" id="1.7.1.1"/>
    </reaction>
</comment>
<comment type="cofactor">
    <cofactor evidence="1">
        <name>FAD</name>
        <dbReference type="ChEBI" id="CHEBI:57692"/>
    </cofactor>
    <text evidence="1">Binds 1 FAD per subunit.</text>
</comment>
<comment type="cofactor">
    <cofactor evidence="1">
        <name>heme</name>
        <dbReference type="ChEBI" id="CHEBI:30413"/>
    </cofactor>
    <text evidence="1">Binds 1 heme group per subunit.</text>
</comment>
<comment type="cofactor">
    <cofactor evidence="1">
        <name>Mo-molybdopterin</name>
        <dbReference type="ChEBI" id="CHEBI:71302"/>
    </cofactor>
    <text evidence="1">Binds 1 Mo-molybdopterin (Mo-MPT) cofactor per subunit.</text>
</comment>
<comment type="activity regulation">
    <text>Regulated by the nitrogen source and controlled by the circadian rhythm.</text>
</comment>
<comment type="subunit">
    <text evidence="1">Homodimer.</text>
</comment>
<comment type="developmental stage">
    <text>Maximum expression 2 hours after sunrise. Low expression found 2 hours before and 8 hours after sunrise.</text>
</comment>
<comment type="similarity">
    <text evidence="8">Belongs to the nitrate reductase family.</text>
</comment>